<gene>
    <name evidence="1" type="primary">aroB</name>
    <name type="ordered locus">RD1_3087</name>
</gene>
<reference key="1">
    <citation type="journal article" date="2007" name="J. Bacteriol.">
        <title>The complete genome sequence of Roseobacter denitrificans reveals a mixotrophic rather than photosynthetic metabolism.</title>
        <authorList>
            <person name="Swingley W.D."/>
            <person name="Sadekar S."/>
            <person name="Mastrian S.D."/>
            <person name="Matthies H.J."/>
            <person name="Hao J."/>
            <person name="Ramos H."/>
            <person name="Acharya C.R."/>
            <person name="Conrad A.L."/>
            <person name="Taylor H.L."/>
            <person name="Dejesa L.C."/>
            <person name="Shah M.K."/>
            <person name="O'Huallachain M.E."/>
            <person name="Lince M.T."/>
            <person name="Blankenship R.E."/>
            <person name="Beatty J.T."/>
            <person name="Touchman J.W."/>
        </authorList>
    </citation>
    <scope>NUCLEOTIDE SEQUENCE [LARGE SCALE GENOMIC DNA]</scope>
    <source>
        <strain>ATCC 33942 / OCh 114</strain>
    </source>
</reference>
<feature type="chain" id="PRO_1000094590" description="3-dehydroquinate synthase">
    <location>
        <begin position="1"/>
        <end position="370"/>
    </location>
</feature>
<feature type="binding site" evidence="1">
    <location>
        <begin position="107"/>
        <end position="111"/>
    </location>
    <ligand>
        <name>NAD(+)</name>
        <dbReference type="ChEBI" id="CHEBI:57540"/>
    </ligand>
</feature>
<feature type="binding site" evidence="1">
    <location>
        <begin position="131"/>
        <end position="132"/>
    </location>
    <ligand>
        <name>NAD(+)</name>
        <dbReference type="ChEBI" id="CHEBI:57540"/>
    </ligand>
</feature>
<feature type="binding site" evidence="1">
    <location>
        <position position="144"/>
    </location>
    <ligand>
        <name>NAD(+)</name>
        <dbReference type="ChEBI" id="CHEBI:57540"/>
    </ligand>
</feature>
<feature type="binding site" evidence="1">
    <location>
        <position position="153"/>
    </location>
    <ligand>
        <name>NAD(+)</name>
        <dbReference type="ChEBI" id="CHEBI:57540"/>
    </ligand>
</feature>
<feature type="binding site" evidence="1">
    <location>
        <position position="186"/>
    </location>
    <ligand>
        <name>Zn(2+)</name>
        <dbReference type="ChEBI" id="CHEBI:29105"/>
    </ligand>
</feature>
<feature type="binding site" evidence="1">
    <location>
        <position position="249"/>
    </location>
    <ligand>
        <name>Zn(2+)</name>
        <dbReference type="ChEBI" id="CHEBI:29105"/>
    </ligand>
</feature>
<feature type="binding site" evidence="1">
    <location>
        <position position="267"/>
    </location>
    <ligand>
        <name>Zn(2+)</name>
        <dbReference type="ChEBI" id="CHEBI:29105"/>
    </ligand>
</feature>
<keyword id="KW-0028">Amino-acid biosynthesis</keyword>
<keyword id="KW-0057">Aromatic amino acid biosynthesis</keyword>
<keyword id="KW-0170">Cobalt</keyword>
<keyword id="KW-0963">Cytoplasm</keyword>
<keyword id="KW-0456">Lyase</keyword>
<keyword id="KW-0479">Metal-binding</keyword>
<keyword id="KW-0520">NAD</keyword>
<keyword id="KW-0547">Nucleotide-binding</keyword>
<keyword id="KW-1185">Reference proteome</keyword>
<keyword id="KW-0862">Zinc</keyword>
<dbReference type="EC" id="4.2.3.4" evidence="1"/>
<dbReference type="EMBL" id="CP000362">
    <property type="protein sequence ID" value="ABG32597.1"/>
    <property type="molecule type" value="Genomic_DNA"/>
</dbReference>
<dbReference type="RefSeq" id="WP_011569213.1">
    <property type="nucleotide sequence ID" value="NC_008209.1"/>
</dbReference>
<dbReference type="SMR" id="Q164J6"/>
<dbReference type="STRING" id="375451.RD1_3087"/>
<dbReference type="KEGG" id="rde:RD1_3087"/>
<dbReference type="eggNOG" id="COG0337">
    <property type="taxonomic scope" value="Bacteria"/>
</dbReference>
<dbReference type="HOGENOM" id="CLU_001201_0_2_5"/>
<dbReference type="OrthoDB" id="9806583at2"/>
<dbReference type="UniPathway" id="UPA00053">
    <property type="reaction ID" value="UER00085"/>
</dbReference>
<dbReference type="Proteomes" id="UP000007029">
    <property type="component" value="Chromosome"/>
</dbReference>
<dbReference type="GO" id="GO:0005737">
    <property type="term" value="C:cytoplasm"/>
    <property type="evidence" value="ECO:0007669"/>
    <property type="project" value="UniProtKB-SubCell"/>
</dbReference>
<dbReference type="GO" id="GO:0003856">
    <property type="term" value="F:3-dehydroquinate synthase activity"/>
    <property type="evidence" value="ECO:0007669"/>
    <property type="project" value="UniProtKB-UniRule"/>
</dbReference>
<dbReference type="GO" id="GO:0046872">
    <property type="term" value="F:metal ion binding"/>
    <property type="evidence" value="ECO:0007669"/>
    <property type="project" value="UniProtKB-KW"/>
</dbReference>
<dbReference type="GO" id="GO:0000166">
    <property type="term" value="F:nucleotide binding"/>
    <property type="evidence" value="ECO:0007669"/>
    <property type="project" value="UniProtKB-KW"/>
</dbReference>
<dbReference type="GO" id="GO:0008652">
    <property type="term" value="P:amino acid biosynthetic process"/>
    <property type="evidence" value="ECO:0007669"/>
    <property type="project" value="UniProtKB-KW"/>
</dbReference>
<dbReference type="GO" id="GO:0009073">
    <property type="term" value="P:aromatic amino acid family biosynthetic process"/>
    <property type="evidence" value="ECO:0007669"/>
    <property type="project" value="UniProtKB-KW"/>
</dbReference>
<dbReference type="GO" id="GO:0009423">
    <property type="term" value="P:chorismate biosynthetic process"/>
    <property type="evidence" value="ECO:0007669"/>
    <property type="project" value="UniProtKB-UniRule"/>
</dbReference>
<dbReference type="CDD" id="cd08195">
    <property type="entry name" value="DHQS"/>
    <property type="match status" value="1"/>
</dbReference>
<dbReference type="FunFam" id="3.40.50.1970:FF:000007">
    <property type="entry name" value="Pentafunctional AROM polypeptide"/>
    <property type="match status" value="1"/>
</dbReference>
<dbReference type="Gene3D" id="3.40.50.1970">
    <property type="match status" value="1"/>
</dbReference>
<dbReference type="Gene3D" id="1.20.1090.10">
    <property type="entry name" value="Dehydroquinate synthase-like - alpha domain"/>
    <property type="match status" value="1"/>
</dbReference>
<dbReference type="HAMAP" id="MF_00110">
    <property type="entry name" value="DHQ_synthase"/>
    <property type="match status" value="1"/>
</dbReference>
<dbReference type="InterPro" id="IPR050071">
    <property type="entry name" value="Dehydroquinate_synthase"/>
</dbReference>
<dbReference type="InterPro" id="IPR016037">
    <property type="entry name" value="DHQ_synth_AroB"/>
</dbReference>
<dbReference type="InterPro" id="IPR030963">
    <property type="entry name" value="DHQ_synth_fam"/>
</dbReference>
<dbReference type="InterPro" id="IPR030960">
    <property type="entry name" value="DHQS/DOIS_N"/>
</dbReference>
<dbReference type="InterPro" id="IPR056179">
    <property type="entry name" value="DHQS_C"/>
</dbReference>
<dbReference type="NCBIfam" id="TIGR01357">
    <property type="entry name" value="aroB"/>
    <property type="match status" value="1"/>
</dbReference>
<dbReference type="PANTHER" id="PTHR43622">
    <property type="entry name" value="3-DEHYDROQUINATE SYNTHASE"/>
    <property type="match status" value="1"/>
</dbReference>
<dbReference type="PANTHER" id="PTHR43622:SF7">
    <property type="entry name" value="3-DEHYDROQUINATE SYNTHASE, CHLOROPLASTIC"/>
    <property type="match status" value="1"/>
</dbReference>
<dbReference type="Pfam" id="PF01761">
    <property type="entry name" value="DHQ_synthase"/>
    <property type="match status" value="1"/>
</dbReference>
<dbReference type="Pfam" id="PF24621">
    <property type="entry name" value="DHQS_C"/>
    <property type="match status" value="1"/>
</dbReference>
<dbReference type="PIRSF" id="PIRSF001455">
    <property type="entry name" value="DHQ_synth"/>
    <property type="match status" value="1"/>
</dbReference>
<dbReference type="SUPFAM" id="SSF56796">
    <property type="entry name" value="Dehydroquinate synthase-like"/>
    <property type="match status" value="1"/>
</dbReference>
<evidence type="ECO:0000255" key="1">
    <source>
        <dbReference type="HAMAP-Rule" id="MF_00110"/>
    </source>
</evidence>
<sequence>MLDTVRVDLPGRAYDVRIGSGLLPEAGGHVLPLLKRPRVAVVTDETVAGLHLEALRAGLARDGIEMSALALPAGEATKSWAPLERTVGWLLDQKVERGDVVVAFGGGVIGDLVGFAAAILRRGVRFVQIPTSLLAQVDSSVGGKTGINAAQGKNLIGAFHQPSLVLADIDVLGSLTARDFLAGYGEVVKYGLLGDLTFFEWLEQNGPALAAGDKGARCEAVRRSVQMKADIVIRDETEQGDRALLNLGHTFGHALEAATGYSDRLLHGEGVAIGCALAFELSARMGLCSQESPSRVRAHLKAMGMKTDLHDIPGDLPDAACLLDLMGQDKKVTQGKLHFILARGLGEAFVTSDVAASDVLMVLEDALRSK</sequence>
<organism>
    <name type="scientific">Roseobacter denitrificans (strain ATCC 33942 / OCh 114)</name>
    <name type="common">Erythrobacter sp. (strain OCh 114)</name>
    <name type="synonym">Roseobacter denitrificans</name>
    <dbReference type="NCBI Taxonomy" id="375451"/>
    <lineage>
        <taxon>Bacteria</taxon>
        <taxon>Pseudomonadati</taxon>
        <taxon>Pseudomonadota</taxon>
        <taxon>Alphaproteobacteria</taxon>
        <taxon>Rhodobacterales</taxon>
        <taxon>Roseobacteraceae</taxon>
        <taxon>Roseobacter</taxon>
    </lineage>
</organism>
<protein>
    <recommendedName>
        <fullName evidence="1">3-dehydroquinate synthase</fullName>
        <shortName evidence="1">DHQS</shortName>
        <ecNumber evidence="1">4.2.3.4</ecNumber>
    </recommendedName>
</protein>
<accession>Q164J6</accession>
<proteinExistence type="inferred from homology"/>
<comment type="function">
    <text evidence="1">Catalyzes the conversion of 3-deoxy-D-arabino-heptulosonate 7-phosphate (DAHP) to dehydroquinate (DHQ).</text>
</comment>
<comment type="catalytic activity">
    <reaction evidence="1">
        <text>7-phospho-2-dehydro-3-deoxy-D-arabino-heptonate = 3-dehydroquinate + phosphate</text>
        <dbReference type="Rhea" id="RHEA:21968"/>
        <dbReference type="ChEBI" id="CHEBI:32364"/>
        <dbReference type="ChEBI" id="CHEBI:43474"/>
        <dbReference type="ChEBI" id="CHEBI:58394"/>
        <dbReference type="EC" id="4.2.3.4"/>
    </reaction>
</comment>
<comment type="cofactor">
    <cofactor evidence="1">
        <name>Co(2+)</name>
        <dbReference type="ChEBI" id="CHEBI:48828"/>
    </cofactor>
    <cofactor evidence="1">
        <name>Zn(2+)</name>
        <dbReference type="ChEBI" id="CHEBI:29105"/>
    </cofactor>
    <text evidence="1">Binds 1 divalent metal cation per subunit. Can use either Co(2+) or Zn(2+).</text>
</comment>
<comment type="cofactor">
    <cofactor evidence="1">
        <name>NAD(+)</name>
        <dbReference type="ChEBI" id="CHEBI:57540"/>
    </cofactor>
</comment>
<comment type="pathway">
    <text evidence="1">Metabolic intermediate biosynthesis; chorismate biosynthesis; chorismate from D-erythrose 4-phosphate and phosphoenolpyruvate: step 2/7.</text>
</comment>
<comment type="subcellular location">
    <subcellularLocation>
        <location evidence="1">Cytoplasm</location>
    </subcellularLocation>
</comment>
<comment type="similarity">
    <text evidence="1">Belongs to the sugar phosphate cyclases superfamily. Dehydroquinate synthase family.</text>
</comment>
<name>AROB_ROSDO</name>